<sequence length="160" mass="17471">MGVFTYETEFTSVIPPPRLFKAFILDADNLIPKIAPQAVKCAEIIEGDGGVGTIKKITFGEGSQFGSVTHKIDGIDKDNFAYSYSLVEGDALSDKIEKISYETKLVASSDGGSVIKSTSNYHTKGDVEIKEEHVKAGKEKASHLFKLVEDYLLANPNEYC</sequence>
<evidence type="ECO:0000250" key="1">
    <source>
        <dbReference type="UniProtKB" id="A0A024B3G5"/>
    </source>
</evidence>
<evidence type="ECO:0000269" key="2">
    <source>
    </source>
</evidence>
<evidence type="ECO:0000303" key="3">
    <source>
    </source>
</evidence>
<evidence type="ECO:0000305" key="4"/>
<dbReference type="EC" id="3.1.27.-" evidence="2"/>
<dbReference type="EMBL" id="KJ507735">
    <property type="protein sequence ID" value="AHZ10955.1"/>
    <property type="molecule type" value="mRNA"/>
</dbReference>
<dbReference type="SMR" id="A0A024B3D0"/>
<dbReference type="GO" id="GO:0005737">
    <property type="term" value="C:cytoplasm"/>
    <property type="evidence" value="ECO:0007669"/>
    <property type="project" value="TreeGrafter"/>
</dbReference>
<dbReference type="GO" id="GO:0005634">
    <property type="term" value="C:nucleus"/>
    <property type="evidence" value="ECO:0007669"/>
    <property type="project" value="TreeGrafter"/>
</dbReference>
<dbReference type="GO" id="GO:0010427">
    <property type="term" value="F:abscisic acid binding"/>
    <property type="evidence" value="ECO:0007669"/>
    <property type="project" value="InterPro"/>
</dbReference>
<dbReference type="GO" id="GO:0004518">
    <property type="term" value="F:nuclease activity"/>
    <property type="evidence" value="ECO:0007669"/>
    <property type="project" value="UniProtKB-KW"/>
</dbReference>
<dbReference type="GO" id="GO:0004864">
    <property type="term" value="F:protein phosphatase inhibitor activity"/>
    <property type="evidence" value="ECO:0007669"/>
    <property type="project" value="InterPro"/>
</dbReference>
<dbReference type="GO" id="GO:0038023">
    <property type="term" value="F:signaling receptor activity"/>
    <property type="evidence" value="ECO:0007669"/>
    <property type="project" value="InterPro"/>
</dbReference>
<dbReference type="GO" id="GO:0009738">
    <property type="term" value="P:abscisic acid-activated signaling pathway"/>
    <property type="evidence" value="ECO:0007669"/>
    <property type="project" value="InterPro"/>
</dbReference>
<dbReference type="GO" id="GO:0006952">
    <property type="term" value="P:defense response"/>
    <property type="evidence" value="ECO:0007669"/>
    <property type="project" value="UniProtKB-KW"/>
</dbReference>
<dbReference type="CDD" id="cd07816">
    <property type="entry name" value="Bet_v1-like"/>
    <property type="match status" value="1"/>
</dbReference>
<dbReference type="FunFam" id="3.30.530.20:FF:000007">
    <property type="entry name" value="Major pollen allergen Bet v 1-A"/>
    <property type="match status" value="1"/>
</dbReference>
<dbReference type="Gene3D" id="3.30.530.20">
    <property type="match status" value="1"/>
</dbReference>
<dbReference type="InterPro" id="IPR000916">
    <property type="entry name" value="Bet_v_I/MLP"/>
</dbReference>
<dbReference type="InterPro" id="IPR024949">
    <property type="entry name" value="Bet_v_I_allergen"/>
</dbReference>
<dbReference type="InterPro" id="IPR050279">
    <property type="entry name" value="Plant_def-hormone_signal"/>
</dbReference>
<dbReference type="InterPro" id="IPR023393">
    <property type="entry name" value="START-like_dom_sf"/>
</dbReference>
<dbReference type="PANTHER" id="PTHR31213">
    <property type="entry name" value="OS08G0374000 PROTEIN-RELATED"/>
    <property type="match status" value="1"/>
</dbReference>
<dbReference type="PANTHER" id="PTHR31213:SF55">
    <property type="entry name" value="STRESS-INDUCED PROTEIN SAM22"/>
    <property type="match status" value="1"/>
</dbReference>
<dbReference type="Pfam" id="PF00407">
    <property type="entry name" value="Bet_v_1"/>
    <property type="match status" value="1"/>
</dbReference>
<dbReference type="PRINTS" id="PR00634">
    <property type="entry name" value="BETALLERGEN"/>
</dbReference>
<dbReference type="SUPFAM" id="SSF55961">
    <property type="entry name" value="Bet v1-like"/>
    <property type="match status" value="1"/>
</dbReference>
<dbReference type="PROSITE" id="PS00451">
    <property type="entry name" value="PATHOGENESIS_BETVI"/>
    <property type="match status" value="1"/>
</dbReference>
<gene>
    <name evidence="3" type="primary">Fra a 1.04</name>
</gene>
<feature type="chain" id="PRO_0000447015" description="Major strawberry allergen Fra a 1.04">
    <location>
        <begin position="1"/>
        <end position="160"/>
    </location>
</feature>
<reference key="1">
    <citation type="journal article" date="2016" name="J. Agric. Food Chem.">
        <title>Fra a 1.02 is the most potent isoform of the Bet v 1-like allergen in strawberry fruit.</title>
        <authorList>
            <person name="Franz-Oberdorf K."/>
            <person name="Eberlein B."/>
            <person name="Edelmann K."/>
            <person name="Huecherig S."/>
            <person name="Besbes F."/>
            <person name="Darsow U."/>
            <person name="Ring J."/>
            <person name="Schwab W."/>
        </authorList>
    </citation>
    <scope>NUCLEOTIDE SEQUENCE [MRNA]</scope>
</reference>
<reference key="2">
    <citation type="journal article" date="2019" name="J. Plant Physiol.">
        <title>Phosphorylation-dependent ribonuclease activity of Fra a 1 proteins.</title>
        <authorList>
            <person name="Besbes F."/>
            <person name="Franz-Oberdorf K."/>
            <person name="Schwab W."/>
        </authorList>
    </citation>
    <scope>FUNCTION</scope>
    <scope>TISSUE SPECIFICITY</scope>
    <scope>PHOSPHORYLATION</scope>
</reference>
<accession>A0A024B3D0</accession>
<name>FRA14_FRAAN</name>
<organism>
    <name type="scientific">Fragaria ananassa</name>
    <name type="common">Strawberry</name>
    <name type="synonym">Fragaria chiloensis x Fragaria virginiana</name>
    <dbReference type="NCBI Taxonomy" id="3747"/>
    <lineage>
        <taxon>Eukaryota</taxon>
        <taxon>Viridiplantae</taxon>
        <taxon>Streptophyta</taxon>
        <taxon>Embryophyta</taxon>
        <taxon>Tracheophyta</taxon>
        <taxon>Spermatophyta</taxon>
        <taxon>Magnoliopsida</taxon>
        <taxon>eudicotyledons</taxon>
        <taxon>Gunneridae</taxon>
        <taxon>Pentapetalae</taxon>
        <taxon>rosids</taxon>
        <taxon>fabids</taxon>
        <taxon>Rosales</taxon>
        <taxon>Rosaceae</taxon>
        <taxon>Rosoideae</taxon>
        <taxon>Potentilleae</taxon>
        <taxon>Fragariinae</taxon>
        <taxon>Fragaria</taxon>
    </lineage>
</organism>
<protein>
    <recommendedName>
        <fullName evidence="4">Major strawberry allergen Fra a 1.04</fullName>
    </recommendedName>
    <alternativeName>
        <fullName evidence="4">Class 10 plant pathogenesis-related protein Fra a 1.04</fullName>
        <shortName evidence="4">PR10-related protein Fra a 1.04</shortName>
        <ecNumber evidence="2">3.1.27.-</ecNumber>
    </alternativeName>
    <allergenName evidence="4">Fra a 1</allergenName>
</protein>
<comment type="function">
    <text evidence="2">Possesses ribonuclease activity in vitro.</text>
</comment>
<comment type="tissue specificity">
    <text evidence="2">Highly expressed in roots (PubMed:30572279). Expressed a low levels in ripe red fruits (PubMed:30572279).</text>
</comment>
<comment type="PTM">
    <text evidence="2">Phosphorylated in vivo. Phosphorylation prevents its activity as ribonuclease.</text>
</comment>
<comment type="allergen">
    <text evidence="1">May cause an allergic reaction in human.</text>
</comment>
<comment type="similarity">
    <text evidence="4">Belongs to the BetVI family.</text>
</comment>
<keyword id="KW-0020">Allergen</keyword>
<keyword id="KW-0378">Hydrolase</keyword>
<keyword id="KW-0540">Nuclease</keyword>
<keyword id="KW-0568">Pathogenesis-related protein</keyword>
<keyword id="KW-0597">Phosphoprotein</keyword>
<keyword id="KW-0611">Plant defense</keyword>
<proteinExistence type="evidence at protein level"/>